<reference key="1">
    <citation type="journal article" date="2005" name="Science">
        <title>The transcriptional landscape of the mammalian genome.</title>
        <authorList>
            <person name="Carninci P."/>
            <person name="Kasukawa T."/>
            <person name="Katayama S."/>
            <person name="Gough J."/>
            <person name="Frith M.C."/>
            <person name="Maeda N."/>
            <person name="Oyama R."/>
            <person name="Ravasi T."/>
            <person name="Lenhard B."/>
            <person name="Wells C."/>
            <person name="Kodzius R."/>
            <person name="Shimokawa K."/>
            <person name="Bajic V.B."/>
            <person name="Brenner S.E."/>
            <person name="Batalov S."/>
            <person name="Forrest A.R."/>
            <person name="Zavolan M."/>
            <person name="Davis M.J."/>
            <person name="Wilming L.G."/>
            <person name="Aidinis V."/>
            <person name="Allen J.E."/>
            <person name="Ambesi-Impiombato A."/>
            <person name="Apweiler R."/>
            <person name="Aturaliya R.N."/>
            <person name="Bailey T.L."/>
            <person name="Bansal M."/>
            <person name="Baxter L."/>
            <person name="Beisel K.W."/>
            <person name="Bersano T."/>
            <person name="Bono H."/>
            <person name="Chalk A.M."/>
            <person name="Chiu K.P."/>
            <person name="Choudhary V."/>
            <person name="Christoffels A."/>
            <person name="Clutterbuck D.R."/>
            <person name="Crowe M.L."/>
            <person name="Dalla E."/>
            <person name="Dalrymple B.P."/>
            <person name="de Bono B."/>
            <person name="Della Gatta G."/>
            <person name="di Bernardo D."/>
            <person name="Down T."/>
            <person name="Engstrom P."/>
            <person name="Fagiolini M."/>
            <person name="Faulkner G."/>
            <person name="Fletcher C.F."/>
            <person name="Fukushima T."/>
            <person name="Furuno M."/>
            <person name="Futaki S."/>
            <person name="Gariboldi M."/>
            <person name="Georgii-Hemming P."/>
            <person name="Gingeras T.R."/>
            <person name="Gojobori T."/>
            <person name="Green R.E."/>
            <person name="Gustincich S."/>
            <person name="Harbers M."/>
            <person name="Hayashi Y."/>
            <person name="Hensch T.K."/>
            <person name="Hirokawa N."/>
            <person name="Hill D."/>
            <person name="Huminiecki L."/>
            <person name="Iacono M."/>
            <person name="Ikeo K."/>
            <person name="Iwama A."/>
            <person name="Ishikawa T."/>
            <person name="Jakt M."/>
            <person name="Kanapin A."/>
            <person name="Katoh M."/>
            <person name="Kawasawa Y."/>
            <person name="Kelso J."/>
            <person name="Kitamura H."/>
            <person name="Kitano H."/>
            <person name="Kollias G."/>
            <person name="Krishnan S.P."/>
            <person name="Kruger A."/>
            <person name="Kummerfeld S.K."/>
            <person name="Kurochkin I.V."/>
            <person name="Lareau L.F."/>
            <person name="Lazarevic D."/>
            <person name="Lipovich L."/>
            <person name="Liu J."/>
            <person name="Liuni S."/>
            <person name="McWilliam S."/>
            <person name="Madan Babu M."/>
            <person name="Madera M."/>
            <person name="Marchionni L."/>
            <person name="Matsuda H."/>
            <person name="Matsuzawa S."/>
            <person name="Miki H."/>
            <person name="Mignone F."/>
            <person name="Miyake S."/>
            <person name="Morris K."/>
            <person name="Mottagui-Tabar S."/>
            <person name="Mulder N."/>
            <person name="Nakano N."/>
            <person name="Nakauchi H."/>
            <person name="Ng P."/>
            <person name="Nilsson R."/>
            <person name="Nishiguchi S."/>
            <person name="Nishikawa S."/>
            <person name="Nori F."/>
            <person name="Ohara O."/>
            <person name="Okazaki Y."/>
            <person name="Orlando V."/>
            <person name="Pang K.C."/>
            <person name="Pavan W.J."/>
            <person name="Pavesi G."/>
            <person name="Pesole G."/>
            <person name="Petrovsky N."/>
            <person name="Piazza S."/>
            <person name="Reed J."/>
            <person name="Reid J.F."/>
            <person name="Ring B.Z."/>
            <person name="Ringwald M."/>
            <person name="Rost B."/>
            <person name="Ruan Y."/>
            <person name="Salzberg S.L."/>
            <person name="Sandelin A."/>
            <person name="Schneider C."/>
            <person name="Schoenbach C."/>
            <person name="Sekiguchi K."/>
            <person name="Semple C.A."/>
            <person name="Seno S."/>
            <person name="Sessa L."/>
            <person name="Sheng Y."/>
            <person name="Shibata Y."/>
            <person name="Shimada H."/>
            <person name="Shimada K."/>
            <person name="Silva D."/>
            <person name="Sinclair B."/>
            <person name="Sperling S."/>
            <person name="Stupka E."/>
            <person name="Sugiura K."/>
            <person name="Sultana R."/>
            <person name="Takenaka Y."/>
            <person name="Taki K."/>
            <person name="Tammoja K."/>
            <person name="Tan S.L."/>
            <person name="Tang S."/>
            <person name="Taylor M.S."/>
            <person name="Tegner J."/>
            <person name="Teichmann S.A."/>
            <person name="Ueda H.R."/>
            <person name="van Nimwegen E."/>
            <person name="Verardo R."/>
            <person name="Wei C.L."/>
            <person name="Yagi K."/>
            <person name="Yamanishi H."/>
            <person name="Zabarovsky E."/>
            <person name="Zhu S."/>
            <person name="Zimmer A."/>
            <person name="Hide W."/>
            <person name="Bult C."/>
            <person name="Grimmond S.M."/>
            <person name="Teasdale R.D."/>
            <person name="Liu E.T."/>
            <person name="Brusic V."/>
            <person name="Quackenbush J."/>
            <person name="Wahlestedt C."/>
            <person name="Mattick J.S."/>
            <person name="Hume D.A."/>
            <person name="Kai C."/>
            <person name="Sasaki D."/>
            <person name="Tomaru Y."/>
            <person name="Fukuda S."/>
            <person name="Kanamori-Katayama M."/>
            <person name="Suzuki M."/>
            <person name="Aoki J."/>
            <person name="Arakawa T."/>
            <person name="Iida J."/>
            <person name="Imamura K."/>
            <person name="Itoh M."/>
            <person name="Kato T."/>
            <person name="Kawaji H."/>
            <person name="Kawagashira N."/>
            <person name="Kawashima T."/>
            <person name="Kojima M."/>
            <person name="Kondo S."/>
            <person name="Konno H."/>
            <person name="Nakano K."/>
            <person name="Ninomiya N."/>
            <person name="Nishio T."/>
            <person name="Okada M."/>
            <person name="Plessy C."/>
            <person name="Shibata K."/>
            <person name="Shiraki T."/>
            <person name="Suzuki S."/>
            <person name="Tagami M."/>
            <person name="Waki K."/>
            <person name="Watahiki A."/>
            <person name="Okamura-Oho Y."/>
            <person name="Suzuki H."/>
            <person name="Kawai J."/>
            <person name="Hayashizaki Y."/>
        </authorList>
    </citation>
    <scope>NUCLEOTIDE SEQUENCE [LARGE SCALE MRNA]</scope>
    <source>
        <strain>C57BL/6J</strain>
        <tissue>Pancreas</tissue>
        <tissue>Spleen</tissue>
        <tissue>Stomach</tissue>
    </source>
</reference>
<reference key="2">
    <citation type="journal article" date="2004" name="Genome Res.">
        <title>The status, quality, and expansion of the NIH full-length cDNA project: the Mammalian Gene Collection (MGC).</title>
        <authorList>
            <consortium name="The MGC Project Team"/>
        </authorList>
    </citation>
    <scope>NUCLEOTIDE SEQUENCE [LARGE SCALE MRNA]</scope>
    <source>
        <tissue>Liver</tissue>
    </source>
</reference>
<reference key="3">
    <citation type="journal article" date="2010" name="Cell">
        <title>A tissue-specific atlas of mouse protein phosphorylation and expression.</title>
        <authorList>
            <person name="Huttlin E.L."/>
            <person name="Jedrychowski M.P."/>
            <person name="Elias J.E."/>
            <person name="Goswami T."/>
            <person name="Rad R."/>
            <person name="Beausoleil S.A."/>
            <person name="Villen J."/>
            <person name="Haas W."/>
            <person name="Sowa M.E."/>
            <person name="Gygi S.P."/>
        </authorList>
    </citation>
    <scope>PHOSPHORYLATION [LARGE SCALE ANALYSIS] AT SER-93</scope>
    <scope>IDENTIFICATION BY MASS SPECTROMETRY [LARGE SCALE ANALYSIS]</scope>
    <source>
        <tissue>Liver</tissue>
        <tissue>Lung</tissue>
        <tissue>Pancreas</tissue>
        <tissue>Spleen</tissue>
    </source>
</reference>
<feature type="signal peptide" evidence="1">
    <location>
        <begin position="1"/>
        <end position="18"/>
    </location>
</feature>
<feature type="chain" id="PRO_0000285874" description="Chymotrypsinogen B">
    <location>
        <begin position="19"/>
        <end position="263"/>
    </location>
</feature>
<feature type="chain" id="PRO_0000285875" description="Chymotrypsin B chain A" evidence="1">
    <location>
        <begin position="19"/>
        <end position="31"/>
    </location>
</feature>
<feature type="chain" id="PRO_0000285876" description="Chymotrypsin B chain B" evidence="1">
    <location>
        <begin position="34"/>
        <end position="164"/>
    </location>
</feature>
<feature type="chain" id="PRO_0000285877" description="Chymotrypsin B chain C" evidence="1">
    <location>
        <begin position="167"/>
        <end position="263"/>
    </location>
</feature>
<feature type="domain" description="Peptidase S1" evidence="2">
    <location>
        <begin position="34"/>
        <end position="261"/>
    </location>
</feature>
<feature type="active site" description="Charge relay system" evidence="1">
    <location>
        <position position="75"/>
    </location>
</feature>
<feature type="active site" description="Charge relay system" evidence="1">
    <location>
        <position position="120"/>
    </location>
</feature>
<feature type="active site" description="Charge relay system" evidence="1">
    <location>
        <position position="213"/>
    </location>
</feature>
<feature type="modified residue" description="Phosphoserine" evidence="6">
    <location>
        <position position="93"/>
    </location>
</feature>
<feature type="disulfide bond" evidence="2">
    <location>
        <begin position="19"/>
        <end position="140"/>
    </location>
</feature>
<feature type="disulfide bond" evidence="2">
    <location>
        <begin position="60"/>
        <end position="76"/>
    </location>
</feature>
<feature type="disulfide bond" evidence="2">
    <location>
        <begin position="154"/>
        <end position="219"/>
    </location>
</feature>
<feature type="disulfide bond" evidence="2">
    <location>
        <begin position="186"/>
        <end position="200"/>
    </location>
</feature>
<feature type="disulfide bond" evidence="2">
    <location>
        <begin position="209"/>
        <end position="238"/>
    </location>
</feature>
<feature type="sequence conflict" description="In Ref. 1; BAB25112." evidence="5" ref="1">
    <original>S</original>
    <variation>Y</variation>
    <location>
        <position position="63"/>
    </location>
</feature>
<feature type="sequence conflict" description="In Ref. 1; BAB22539." evidence="5" ref="1">
    <original>D</original>
    <variation>N</variation>
    <location>
        <position position="82"/>
    </location>
</feature>
<name>CTRB1_MOUSE</name>
<dbReference type="EC" id="3.4.21.1"/>
<dbReference type="EMBL" id="AK003060">
    <property type="protein sequence ID" value="BAB22539.1"/>
    <property type="molecule type" value="mRNA"/>
</dbReference>
<dbReference type="EMBL" id="AK003079">
    <property type="protein sequence ID" value="BAB22553.1"/>
    <property type="molecule type" value="mRNA"/>
</dbReference>
<dbReference type="EMBL" id="AK007566">
    <property type="protein sequence ID" value="BAB25112.1"/>
    <property type="molecule type" value="mRNA"/>
</dbReference>
<dbReference type="EMBL" id="AK007765">
    <property type="protein sequence ID" value="BAB25241.1"/>
    <property type="molecule type" value="mRNA"/>
</dbReference>
<dbReference type="EMBL" id="AK007815">
    <property type="protein sequence ID" value="BAB25280.1"/>
    <property type="molecule type" value="mRNA"/>
</dbReference>
<dbReference type="EMBL" id="AK008644">
    <property type="protein sequence ID" value="BAC25226.1"/>
    <property type="molecule type" value="mRNA"/>
</dbReference>
<dbReference type="EMBL" id="AK008729">
    <property type="protein sequence ID" value="BAB25861.1"/>
    <property type="molecule type" value="mRNA"/>
</dbReference>
<dbReference type="EMBL" id="AK008888">
    <property type="protein sequence ID" value="BAB25954.1"/>
    <property type="molecule type" value="mRNA"/>
</dbReference>
<dbReference type="EMBL" id="AK008927">
    <property type="protein sequence ID" value="BAB25971.1"/>
    <property type="molecule type" value="mRNA"/>
</dbReference>
<dbReference type="EMBL" id="BC061083">
    <property type="protein sequence ID" value="AAH61083.1"/>
    <property type="molecule type" value="mRNA"/>
</dbReference>
<dbReference type="CCDS" id="CCDS22679.1"/>
<dbReference type="RefSeq" id="NP_079859.2">
    <property type="nucleotide sequence ID" value="NM_025583.2"/>
</dbReference>
<dbReference type="SMR" id="Q9CR35"/>
<dbReference type="FunCoup" id="Q9CR35">
    <property type="interactions" value="400"/>
</dbReference>
<dbReference type="STRING" id="10090.ENSMUSP00000034435"/>
<dbReference type="MEROPS" id="S01.152"/>
<dbReference type="iPTMnet" id="Q9CR35"/>
<dbReference type="PhosphoSitePlus" id="Q9CR35"/>
<dbReference type="jPOST" id="Q9CR35"/>
<dbReference type="PaxDb" id="10090-ENSMUSP00000034435"/>
<dbReference type="PeptideAtlas" id="Q9CR35"/>
<dbReference type="ProteomicsDB" id="279201"/>
<dbReference type="DNASU" id="66473"/>
<dbReference type="Ensembl" id="ENSMUST00000034435.7">
    <property type="protein sequence ID" value="ENSMUSP00000034435.6"/>
    <property type="gene ID" value="ENSMUSG00000031957.7"/>
</dbReference>
<dbReference type="GeneID" id="66473"/>
<dbReference type="KEGG" id="mmu:66473"/>
<dbReference type="UCSC" id="uc009nms.2">
    <property type="organism name" value="mouse"/>
</dbReference>
<dbReference type="AGR" id="MGI:88559"/>
<dbReference type="CTD" id="1504"/>
<dbReference type="MGI" id="MGI:88559">
    <property type="gene designation" value="Ctrb1"/>
</dbReference>
<dbReference type="VEuPathDB" id="HostDB:ENSMUSG00000031957"/>
<dbReference type="eggNOG" id="KOG3627">
    <property type="taxonomic scope" value="Eukaryota"/>
</dbReference>
<dbReference type="GeneTree" id="ENSGT00940000153216"/>
<dbReference type="HOGENOM" id="CLU_006842_7_6_1"/>
<dbReference type="InParanoid" id="Q9CR35"/>
<dbReference type="OMA" id="WGFRIAD"/>
<dbReference type="OrthoDB" id="5918597at2759"/>
<dbReference type="PhylomeDB" id="Q9CR35"/>
<dbReference type="TreeFam" id="TF330455"/>
<dbReference type="Reactome" id="R-MMU-1592389">
    <property type="pathway name" value="Activation of Matrix Metalloproteinases"/>
</dbReference>
<dbReference type="BioGRID-ORCS" id="66473">
    <property type="hits" value="2 hits in 78 CRISPR screens"/>
</dbReference>
<dbReference type="ChiTaRS" id="Ctrb1">
    <property type="organism name" value="mouse"/>
</dbReference>
<dbReference type="PRO" id="PR:Q9CR35"/>
<dbReference type="Proteomes" id="UP000000589">
    <property type="component" value="Chromosome 8"/>
</dbReference>
<dbReference type="RNAct" id="Q9CR35">
    <property type="molecule type" value="protein"/>
</dbReference>
<dbReference type="Bgee" id="ENSMUSG00000031957">
    <property type="expression patterns" value="Expressed in pyloric antrum and 74 other cell types or tissues"/>
</dbReference>
<dbReference type="GO" id="GO:0005576">
    <property type="term" value="C:extracellular region"/>
    <property type="evidence" value="ECO:0007669"/>
    <property type="project" value="UniProtKB-SubCell"/>
</dbReference>
<dbReference type="GO" id="GO:0008233">
    <property type="term" value="F:peptidase activity"/>
    <property type="evidence" value="ECO:0000314"/>
    <property type="project" value="MGI"/>
</dbReference>
<dbReference type="GO" id="GO:0004252">
    <property type="term" value="F:serine-type endopeptidase activity"/>
    <property type="evidence" value="ECO:0000314"/>
    <property type="project" value="MGI"/>
</dbReference>
<dbReference type="GO" id="GO:0008236">
    <property type="term" value="F:serine-type peptidase activity"/>
    <property type="evidence" value="ECO:0000314"/>
    <property type="project" value="MGI"/>
</dbReference>
<dbReference type="GO" id="GO:0007586">
    <property type="term" value="P:digestion"/>
    <property type="evidence" value="ECO:0007669"/>
    <property type="project" value="UniProtKB-KW"/>
</dbReference>
<dbReference type="GO" id="GO:0006508">
    <property type="term" value="P:proteolysis"/>
    <property type="evidence" value="ECO:0000314"/>
    <property type="project" value="MGI"/>
</dbReference>
<dbReference type="CDD" id="cd00190">
    <property type="entry name" value="Tryp_SPc"/>
    <property type="match status" value="1"/>
</dbReference>
<dbReference type="FunFam" id="2.40.10.10:FF:000118">
    <property type="entry name" value="Chymotrypsinogen A"/>
    <property type="match status" value="1"/>
</dbReference>
<dbReference type="FunFam" id="2.40.10.10:FF:000176">
    <property type="entry name" value="Chymotrypsinogen A"/>
    <property type="match status" value="1"/>
</dbReference>
<dbReference type="Gene3D" id="2.40.10.10">
    <property type="entry name" value="Trypsin-like serine proteases"/>
    <property type="match status" value="3"/>
</dbReference>
<dbReference type="InterPro" id="IPR009003">
    <property type="entry name" value="Peptidase_S1_PA"/>
</dbReference>
<dbReference type="InterPro" id="IPR043504">
    <property type="entry name" value="Peptidase_S1_PA_chymotrypsin"/>
</dbReference>
<dbReference type="InterPro" id="IPR001314">
    <property type="entry name" value="Peptidase_S1A"/>
</dbReference>
<dbReference type="InterPro" id="IPR001254">
    <property type="entry name" value="Trypsin_dom"/>
</dbReference>
<dbReference type="InterPro" id="IPR018114">
    <property type="entry name" value="TRYPSIN_HIS"/>
</dbReference>
<dbReference type="InterPro" id="IPR033116">
    <property type="entry name" value="TRYPSIN_SER"/>
</dbReference>
<dbReference type="PANTHER" id="PTHR24250">
    <property type="entry name" value="CHYMOTRYPSIN-RELATED"/>
    <property type="match status" value="1"/>
</dbReference>
<dbReference type="PANTHER" id="PTHR24250:SF65">
    <property type="entry name" value="CHYMOTRYPSINOGEN B"/>
    <property type="match status" value="1"/>
</dbReference>
<dbReference type="Pfam" id="PF00089">
    <property type="entry name" value="Trypsin"/>
    <property type="match status" value="1"/>
</dbReference>
<dbReference type="PRINTS" id="PR00722">
    <property type="entry name" value="CHYMOTRYPSIN"/>
</dbReference>
<dbReference type="SMART" id="SM00020">
    <property type="entry name" value="Tryp_SPc"/>
    <property type="match status" value="1"/>
</dbReference>
<dbReference type="SUPFAM" id="SSF50494">
    <property type="entry name" value="Trypsin-like serine proteases"/>
    <property type="match status" value="1"/>
</dbReference>
<dbReference type="PROSITE" id="PS50240">
    <property type="entry name" value="TRYPSIN_DOM"/>
    <property type="match status" value="1"/>
</dbReference>
<dbReference type="PROSITE" id="PS00134">
    <property type="entry name" value="TRYPSIN_HIS"/>
    <property type="match status" value="1"/>
</dbReference>
<dbReference type="PROSITE" id="PS00135">
    <property type="entry name" value="TRYPSIN_SER"/>
    <property type="match status" value="1"/>
</dbReference>
<gene>
    <name type="primary">Ctrb1</name>
</gene>
<organism>
    <name type="scientific">Mus musculus</name>
    <name type="common">Mouse</name>
    <dbReference type="NCBI Taxonomy" id="10090"/>
    <lineage>
        <taxon>Eukaryota</taxon>
        <taxon>Metazoa</taxon>
        <taxon>Chordata</taxon>
        <taxon>Craniata</taxon>
        <taxon>Vertebrata</taxon>
        <taxon>Euteleostomi</taxon>
        <taxon>Mammalia</taxon>
        <taxon>Eutheria</taxon>
        <taxon>Euarchontoglires</taxon>
        <taxon>Glires</taxon>
        <taxon>Rodentia</taxon>
        <taxon>Myomorpha</taxon>
        <taxon>Muroidea</taxon>
        <taxon>Muridae</taxon>
        <taxon>Murinae</taxon>
        <taxon>Mus</taxon>
        <taxon>Mus</taxon>
    </lineage>
</organism>
<evidence type="ECO:0000250" key="1"/>
<evidence type="ECO:0000255" key="2">
    <source>
        <dbReference type="PROSITE-ProRule" id="PRU00274"/>
    </source>
</evidence>
<evidence type="ECO:0000255" key="3">
    <source>
        <dbReference type="PROSITE-ProRule" id="PRU10078"/>
    </source>
</evidence>
<evidence type="ECO:0000255" key="4">
    <source>
        <dbReference type="PROSITE-ProRule" id="PRU10079"/>
    </source>
</evidence>
<evidence type="ECO:0000305" key="5"/>
<evidence type="ECO:0007744" key="6">
    <source>
    </source>
</evidence>
<accession>Q9CR35</accession>
<accession>Q9D8X8</accession>
<accession>Q9DC86</accession>
<sequence length="263" mass="27822">MAFLWLVSCFALVGATFGCGVPAIQPVLTGLSRIVNGEDAIPGSWPWQVSLQDRTGFHFCGGSLISENWVVTAAHCGVKTTDVVVAGEFDQGSDEENVQVLKIAQVFKNPKFNSFTVRNDITLLKLATPAQFSETVSAVCLPTVDDDFPAGTLCATTGWGKTKYNALKTPDKLQQAALPIVSEAKCKESWGSKITDVMICAGASGVSSCMGDSGGPLVCQKDGVWTLAGIVSWGSGFCSTSTPAVYARVTALMPWVQEILEAN</sequence>
<keyword id="KW-0222">Digestion</keyword>
<keyword id="KW-1015">Disulfide bond</keyword>
<keyword id="KW-0378">Hydrolase</keyword>
<keyword id="KW-0597">Phosphoprotein</keyword>
<keyword id="KW-0645">Protease</keyword>
<keyword id="KW-1185">Reference proteome</keyword>
<keyword id="KW-0964">Secreted</keyword>
<keyword id="KW-0720">Serine protease</keyword>
<keyword id="KW-0732">Signal</keyword>
<keyword id="KW-0865">Zymogen</keyword>
<proteinExistence type="evidence at protein level"/>
<comment type="catalytic activity">
    <reaction evidence="3 4">
        <text>Preferential cleavage: Tyr-|-Xaa, Trp-|-Xaa, Phe-|-Xaa, Leu-|-Xaa.</text>
        <dbReference type="EC" id="3.4.21.1"/>
    </reaction>
</comment>
<comment type="subcellular location">
    <subcellularLocation>
        <location evidence="1">Secreted</location>
        <location evidence="1">Extracellular space</location>
    </subcellularLocation>
</comment>
<comment type="similarity">
    <text evidence="2">Belongs to the peptidase S1 family.</text>
</comment>
<protein>
    <recommendedName>
        <fullName>Chymotrypsinogen B</fullName>
        <ecNumber>3.4.21.1</ecNumber>
    </recommendedName>
    <component>
        <recommendedName>
            <fullName>Chymotrypsin B chain A</fullName>
        </recommendedName>
    </component>
    <component>
        <recommendedName>
            <fullName>Chymotrypsin B chain B</fullName>
        </recommendedName>
    </component>
    <component>
        <recommendedName>
            <fullName>Chymotrypsin B chain C</fullName>
        </recommendedName>
    </component>
</protein>